<reference key="1">
    <citation type="journal article" date="1998" name="Nature">
        <title>Deciphering the biology of Mycobacterium tuberculosis from the complete genome sequence.</title>
        <authorList>
            <person name="Cole S.T."/>
            <person name="Brosch R."/>
            <person name="Parkhill J."/>
            <person name="Garnier T."/>
            <person name="Churcher C.M."/>
            <person name="Harris D.E."/>
            <person name="Gordon S.V."/>
            <person name="Eiglmeier K."/>
            <person name="Gas S."/>
            <person name="Barry C.E. III"/>
            <person name="Tekaia F."/>
            <person name="Badcock K."/>
            <person name="Basham D."/>
            <person name="Brown D."/>
            <person name="Chillingworth T."/>
            <person name="Connor R."/>
            <person name="Davies R.M."/>
            <person name="Devlin K."/>
            <person name="Feltwell T."/>
            <person name="Gentles S."/>
            <person name="Hamlin N."/>
            <person name="Holroyd S."/>
            <person name="Hornsby T."/>
            <person name="Jagels K."/>
            <person name="Krogh A."/>
            <person name="McLean J."/>
            <person name="Moule S."/>
            <person name="Murphy L.D."/>
            <person name="Oliver S."/>
            <person name="Osborne J."/>
            <person name="Quail M.A."/>
            <person name="Rajandream M.A."/>
            <person name="Rogers J."/>
            <person name="Rutter S."/>
            <person name="Seeger K."/>
            <person name="Skelton S."/>
            <person name="Squares S."/>
            <person name="Squares R."/>
            <person name="Sulston J.E."/>
            <person name="Taylor K."/>
            <person name="Whitehead S."/>
            <person name="Barrell B.G."/>
        </authorList>
    </citation>
    <scope>NUCLEOTIDE SEQUENCE [LARGE SCALE GENOMIC DNA]</scope>
    <source>
        <strain>ATCC 25618 / H37Rv</strain>
    </source>
</reference>
<reference key="2">
    <citation type="journal article" date="2009" name="PLoS Genet.">
        <title>Comprehensive functional analysis of Mycobacterium tuberculosis toxin-antitoxin systems: implications for pathogenesis, stress responses, and evolution.</title>
        <authorList>
            <person name="Ramage H.R."/>
            <person name="Connolly L.E."/>
            <person name="Cox J.S."/>
        </authorList>
    </citation>
    <scope>POSSIBLE FUNCTION</scope>
    <source>
        <strain>ATCC 35801 / TMC 107 / Erdman</strain>
    </source>
</reference>
<comment type="function">
    <text evidence="2">Possibly the antitoxin component of a type II toxin-antitoxin (TA) system. Its cognate toxin is VapC44.</text>
</comment>
<accession>P9WJ17</accession>
<accession>L0TDT2</accession>
<accession>O53373</accession>
<accession>Q7D5P9</accession>
<sequence length="80" mass="8850">MRTTLSIDDDVLLAVKERARREKRTAGEILSDLARQALTNQNPQPAASQEDAFHGFEPLPHRGGAVSNALIDRLRDEEAV</sequence>
<evidence type="ECO:0000256" key="1">
    <source>
        <dbReference type="SAM" id="MobiDB-lite"/>
    </source>
</evidence>
<evidence type="ECO:0000305" key="2">
    <source>
    </source>
</evidence>
<proteinExistence type="predicted"/>
<gene>
    <name type="primary">vapB44</name>
    <name type="ordered locus">Rv3321c</name>
</gene>
<feature type="chain" id="PRO_0000408084" description="Putative antitoxin VapB44">
    <location>
        <begin position="1"/>
        <end position="80"/>
    </location>
</feature>
<feature type="region of interest" description="Disordered" evidence="1">
    <location>
        <begin position="40"/>
        <end position="68"/>
    </location>
</feature>
<organism>
    <name type="scientific">Mycobacterium tuberculosis (strain ATCC 25618 / H37Rv)</name>
    <dbReference type="NCBI Taxonomy" id="83332"/>
    <lineage>
        <taxon>Bacteria</taxon>
        <taxon>Bacillati</taxon>
        <taxon>Actinomycetota</taxon>
        <taxon>Actinomycetes</taxon>
        <taxon>Mycobacteriales</taxon>
        <taxon>Mycobacteriaceae</taxon>
        <taxon>Mycobacterium</taxon>
        <taxon>Mycobacterium tuberculosis complex</taxon>
    </lineage>
</organism>
<name>VPB44_MYCTU</name>
<dbReference type="EMBL" id="AL123456">
    <property type="protein sequence ID" value="CCP46141.1"/>
    <property type="molecule type" value="Genomic_DNA"/>
</dbReference>
<dbReference type="PIR" id="H70843">
    <property type="entry name" value="H70843"/>
</dbReference>
<dbReference type="RefSeq" id="NP_217838.1">
    <property type="nucleotide sequence ID" value="NC_000962.3"/>
</dbReference>
<dbReference type="RefSeq" id="WP_003417286.1">
    <property type="nucleotide sequence ID" value="NZ_NVQJ01000003.1"/>
</dbReference>
<dbReference type="SMR" id="P9WJ17"/>
<dbReference type="STRING" id="83332.Rv3321c"/>
<dbReference type="PaxDb" id="83332-Rv3321c"/>
<dbReference type="DNASU" id="887577"/>
<dbReference type="GeneID" id="887577"/>
<dbReference type="KEGG" id="mtu:Rv3321c"/>
<dbReference type="KEGG" id="mtv:RVBD_3321c"/>
<dbReference type="TubercuList" id="Rv3321c"/>
<dbReference type="eggNOG" id="ENOG5033H2H">
    <property type="taxonomic scope" value="Bacteria"/>
</dbReference>
<dbReference type="InParanoid" id="P9WJ17"/>
<dbReference type="OrthoDB" id="9813767at2"/>
<dbReference type="PhylomeDB" id="P9WJ17"/>
<dbReference type="Proteomes" id="UP000001584">
    <property type="component" value="Chromosome"/>
</dbReference>
<dbReference type="CDD" id="cd21631">
    <property type="entry name" value="RHH_CopG_NikR-like"/>
    <property type="match status" value="1"/>
</dbReference>
<keyword id="KW-1185">Reference proteome</keyword>
<keyword id="KW-1277">Toxin-antitoxin system</keyword>
<protein>
    <recommendedName>
        <fullName>Putative antitoxin VapB44</fullName>
    </recommendedName>
</protein>